<gene>
    <name type="primary">ARHGAP26</name>
    <name type="synonym">GRAF</name>
</gene>
<protein>
    <recommendedName>
        <fullName>Rho GTPase-activating protein 26</fullName>
    </recommendedName>
    <alternativeName>
        <fullName>GTPase regulator associated with focal adhesion kinase</fullName>
    </alternativeName>
    <alternativeName>
        <fullName>Rho-type GTPase-activating protein 26</fullName>
    </alternativeName>
</protein>
<organism>
    <name type="scientific">Gallus gallus</name>
    <name type="common">Chicken</name>
    <dbReference type="NCBI Taxonomy" id="9031"/>
    <lineage>
        <taxon>Eukaryota</taxon>
        <taxon>Metazoa</taxon>
        <taxon>Chordata</taxon>
        <taxon>Craniata</taxon>
        <taxon>Vertebrata</taxon>
        <taxon>Euteleostomi</taxon>
        <taxon>Archelosauria</taxon>
        <taxon>Archosauria</taxon>
        <taxon>Dinosauria</taxon>
        <taxon>Saurischia</taxon>
        <taxon>Theropoda</taxon>
        <taxon>Coelurosauria</taxon>
        <taxon>Aves</taxon>
        <taxon>Neognathae</taxon>
        <taxon>Galloanserae</taxon>
        <taxon>Galliformes</taxon>
        <taxon>Phasianidae</taxon>
        <taxon>Phasianinae</taxon>
        <taxon>Gallus</taxon>
    </lineage>
</organism>
<reference key="1">
    <citation type="journal article" date="2005" name="Genome Biol.">
        <title>Full-length cDNAs from chicken bursal lymphocytes to facilitate gene function analysis.</title>
        <authorList>
            <person name="Caldwell R.B."/>
            <person name="Kierzek A.M."/>
            <person name="Arakawa H."/>
            <person name="Bezzubov Y."/>
            <person name="Zaim J."/>
            <person name="Fiedler P."/>
            <person name="Kutter S."/>
            <person name="Blagodatski A."/>
            <person name="Kostovska D."/>
            <person name="Koter M."/>
            <person name="Plachy J."/>
            <person name="Carninci P."/>
            <person name="Hayashizaki Y."/>
            <person name="Buerstedde J.-M."/>
        </authorList>
    </citation>
    <scope>NUCLEOTIDE SEQUENCE [LARGE SCALE MRNA]</scope>
    <source>
        <strain>CB</strain>
        <tissue>Bursa of Fabricius</tissue>
    </source>
</reference>
<reference key="2">
    <citation type="journal article" date="1996" name="Mol. Cell. Biol.">
        <title>An SH3 domain-containing GTPase-activating protein for Rho and Cdc42 associates with focal adhesion kinase.</title>
        <authorList>
            <person name="Hildebrand J.D."/>
            <person name="Taylor J.M."/>
            <person name="Parsons J.T."/>
        </authorList>
    </citation>
    <scope>NUCLEOTIDE SEQUENCE [MRNA] OF 177-760</scope>
    <scope>FUNCTION</scope>
    <scope>SUBCELLULAR LOCATION</scope>
    <scope>INTERACTION WITH PTK2/FAK1</scope>
    <scope>TISSUE SPECIFICITY</scope>
    <source>
        <tissue>Embryo</tissue>
    </source>
</reference>
<reference key="3">
    <citation type="journal article" date="2000" name="J. Biol. Chem.">
        <title>Structure of the BH domain from Graf and its implications for Rho GTPase recognition.</title>
        <authorList>
            <person name="Longenecker K.L."/>
            <person name="Zhang B."/>
            <person name="Derewenda U."/>
            <person name="Sheffield P.J."/>
            <person name="Dauter Z."/>
            <person name="Parsons J.T."/>
            <person name="Zheng Y."/>
            <person name="Derewenda Z.S."/>
        </authorList>
    </citation>
    <scope>X-RAY CRYSTALLOGRAPHY (2.4 ANGSTROMS) OF 161-391</scope>
    <scope>FUNCTION</scope>
</reference>
<proteinExistence type="evidence at protein level"/>
<feature type="chain" id="PRO_0000355552" description="Rho GTPase-activating protein 26">
    <location>
        <begin position="1"/>
        <end position="760"/>
    </location>
</feature>
<feature type="domain" description="BAR" evidence="1">
    <location>
        <begin position="7"/>
        <end position="262"/>
    </location>
</feature>
<feature type="domain" description="PH" evidence="3">
    <location>
        <begin position="265"/>
        <end position="369"/>
    </location>
</feature>
<feature type="domain" description="Rho-GAP" evidence="4">
    <location>
        <begin position="383"/>
        <end position="568"/>
    </location>
</feature>
<feature type="domain" description="SH3" evidence="5">
    <location>
        <begin position="702"/>
        <end position="760"/>
    </location>
</feature>
<feature type="region of interest" description="Disordered" evidence="6">
    <location>
        <begin position="571"/>
        <end position="617"/>
    </location>
</feature>
<feature type="region of interest" description="Disordered" evidence="6">
    <location>
        <begin position="658"/>
        <end position="701"/>
    </location>
</feature>
<feature type="compositionally biased region" description="Polar residues" evidence="6">
    <location>
        <begin position="605"/>
        <end position="617"/>
    </location>
</feature>
<feature type="compositionally biased region" description="Low complexity" evidence="6">
    <location>
        <begin position="674"/>
        <end position="701"/>
    </location>
</feature>
<feature type="site" description="Arginine finger; crucial for GTP hydrolysis by stabilizing the transition state" evidence="4">
    <location>
        <position position="412"/>
    </location>
</feature>
<feature type="sequence conflict" description="In Ref. 1; CAG30928." evidence="9" ref="1">
    <original>F</original>
    <variation>S</variation>
    <location>
        <position position="196"/>
    </location>
</feature>
<feature type="helix" evidence="10">
    <location>
        <begin position="387"/>
        <end position="403"/>
    </location>
</feature>
<feature type="turn" evidence="10">
    <location>
        <begin position="408"/>
        <end position="412"/>
    </location>
</feature>
<feature type="helix" evidence="10">
    <location>
        <begin position="417"/>
        <end position="428"/>
    </location>
</feature>
<feature type="helix" evidence="10">
    <location>
        <begin position="446"/>
        <end position="458"/>
    </location>
</feature>
<feature type="strand" evidence="10">
    <location>
        <begin position="460"/>
        <end position="462"/>
    </location>
</feature>
<feature type="helix" evidence="10">
    <location>
        <begin position="467"/>
        <end position="477"/>
    </location>
</feature>
<feature type="helix" evidence="10">
    <location>
        <begin position="482"/>
        <end position="493"/>
    </location>
</feature>
<feature type="helix" evidence="10">
    <location>
        <begin position="498"/>
        <end position="516"/>
    </location>
</feature>
<feature type="helix" evidence="10">
    <location>
        <begin position="518"/>
        <end position="521"/>
    </location>
</feature>
<feature type="helix" evidence="10">
    <location>
        <begin position="525"/>
        <end position="536"/>
    </location>
</feature>
<feature type="helix" evidence="10">
    <location>
        <begin position="546"/>
        <end position="549"/>
    </location>
</feature>
<feature type="helix" evidence="10">
    <location>
        <begin position="550"/>
        <end position="562"/>
    </location>
</feature>
<feature type="helix" evidence="10">
    <location>
        <begin position="564"/>
        <end position="569"/>
    </location>
</feature>
<sequence>MGLPALEFSECCLDSPQFRERLRSHEAELEKTNKFIKELIKDGKSLIAALKNLSSAKRKFADSLNEFKFRCIGDAETDDEICIAKSLQEFATVLRNLEDERMRMIENASEVLITPLEKFRKEQIGAAKDAKKKYDKETEKYCGVLEKHLNLSSKKKESQLQEADSQVDLVRQHFYEVSLEYVFKVQEVQERKMFEFVEPLLAFLQGLFTFYHHGYELAKDFSDFKTELTISIQNTRNRFEGTRSEVESLMKKMKENPHEHKNISPYTMEGYLYVQEKRHFGTSWVKHYCTYQRESKRITMVPFDQKSGGKGGEDEAVILKSCTRRKTDSIEKRFCFDVEAVDRPGVITMQALSEEDRRLWMEAMDGREPVYNSNKDNQSEGTAQLDSIGFSIIKKCIHAVETRGINEQGLYRIVGVNSRVQKLLSILMDPKTATETETEICAEWEIKTITSALKTYLRMLPGPLMMYQFQRSFIKAAKLENQESRVSEIHSLVHRLPEKNRQMLHLLMNHLAKVADNHKQNLMTVANLGVVFGPTLLRPQEETVAAIMDIKFQNIVIEILIENHEKIFNTVPETPPSNSQLLLSRKKSTDSKPPSCSERPLTLFHTAQPNEKQESRNSIINSSLESVISSNANSFLNSNSAPQSNLNSSDLELEVIKPNRPNSLPQNPSPTSPLSPSWPMFSAPSSPMPTSSTSSDSSPISSPLRKARALYACKAEHDSELSFTAGTVFDNVHPSQEPGWLEGTLNGKTGLIPENYVEFL</sequence>
<comment type="function">
    <text evidence="2 7 8">GTPase-activating protein for RHOA and CDC42 (PubMed:10982819, PubMed:8649427). May be involved in the regulation of neosynthesized protein export through a Rab-endososomal dependent export route (By similarity).</text>
</comment>
<comment type="subunit">
    <text evidence="8">Binds to the C-terminus of PTK2/FAK1.</text>
</comment>
<comment type="subcellular location">
    <subcellularLocation>
        <location evidence="8">Cell junction</location>
        <location evidence="8">Focal adhesion</location>
    </subcellularLocation>
    <subcellularLocation>
        <location evidence="8">Cytoplasm</location>
        <location evidence="8">Cytoskeleton</location>
    </subcellularLocation>
    <subcellularLocation>
        <location evidence="2">Endosome membrane</location>
    </subcellularLocation>
    <text>Colocalizes with actin stress fibers and cortical actin structures.</text>
</comment>
<comment type="tissue specificity">
    <text evidence="8">Detected in embryonic brain and liver, and at low levels in embryonic eye, heart, lung, intestine and skeletal muscle.</text>
</comment>
<comment type="sequence caution" evidence="9">
    <conflict type="erroneous initiation">
        <sequence resource="EMBL-CDS" id="AAB07998"/>
    </conflict>
</comment>
<keyword id="KW-0002">3D-structure</keyword>
<keyword id="KW-0965">Cell junction</keyword>
<keyword id="KW-0963">Cytoplasm</keyword>
<keyword id="KW-0206">Cytoskeleton</keyword>
<keyword id="KW-0967">Endosome</keyword>
<keyword id="KW-0343">GTPase activation</keyword>
<keyword id="KW-0472">Membrane</keyword>
<keyword id="KW-1185">Reference proteome</keyword>
<keyword id="KW-0728">SH3 domain</keyword>
<dbReference type="EMBL" id="AJ719269">
    <property type="protein sequence ID" value="CAG30928.1"/>
    <property type="molecule type" value="mRNA"/>
</dbReference>
<dbReference type="EMBL" id="U36309">
    <property type="protein sequence ID" value="AAB07998.1"/>
    <property type="status" value="ALT_INIT"/>
    <property type="molecule type" value="mRNA"/>
</dbReference>
<dbReference type="RefSeq" id="NP_990525.3">
    <property type="nucleotide sequence ID" value="NM_205194.3"/>
</dbReference>
<dbReference type="PDB" id="1F7C">
    <property type="method" value="X-ray"/>
    <property type="resolution" value="2.40 A"/>
    <property type="chains" value="A=353-583"/>
</dbReference>
<dbReference type="PDBsum" id="1F7C"/>
<dbReference type="SMR" id="Q5ZMW5"/>
<dbReference type="FunCoup" id="Q5ZMW5">
    <property type="interactions" value="1082"/>
</dbReference>
<dbReference type="STRING" id="9031.ENSGALP00000069212"/>
<dbReference type="GlyGen" id="Q5ZMW5">
    <property type="glycosylation" value="1 site"/>
</dbReference>
<dbReference type="iPTMnet" id="Q5ZMW5"/>
<dbReference type="PaxDb" id="9031-ENSGALP00000011921"/>
<dbReference type="Ensembl" id="ENSGALT00010040366.1">
    <property type="protein sequence ID" value="ENSGALP00010023414.1"/>
    <property type="gene ID" value="ENSGALG00010016732.1"/>
</dbReference>
<dbReference type="GeneID" id="396113"/>
<dbReference type="KEGG" id="gga:396113"/>
<dbReference type="CTD" id="23092"/>
<dbReference type="VEuPathDB" id="HostDB:geneid_396113"/>
<dbReference type="eggNOG" id="KOG1451">
    <property type="taxonomic scope" value="Eukaryota"/>
</dbReference>
<dbReference type="GeneTree" id="ENSGT00940000157254"/>
<dbReference type="HOGENOM" id="CLU_011532_2_0_1"/>
<dbReference type="InParanoid" id="Q5ZMW5"/>
<dbReference type="OMA" id="AXIFNTV"/>
<dbReference type="OrthoDB" id="3183924at2759"/>
<dbReference type="PhylomeDB" id="Q5ZMW5"/>
<dbReference type="Reactome" id="R-GGA-8980692">
    <property type="pathway name" value="RHOA GTPase cycle"/>
</dbReference>
<dbReference type="Reactome" id="R-GGA-9013026">
    <property type="pathway name" value="RHOB GTPase cycle"/>
</dbReference>
<dbReference type="Reactome" id="R-GGA-9013106">
    <property type="pathway name" value="RHOC GTPase cycle"/>
</dbReference>
<dbReference type="Reactome" id="R-GGA-9013148">
    <property type="pathway name" value="CDC42 GTPase cycle"/>
</dbReference>
<dbReference type="Reactome" id="R-GGA-9013149">
    <property type="pathway name" value="RAC1 GTPase cycle"/>
</dbReference>
<dbReference type="Reactome" id="R-GGA-9013404">
    <property type="pathway name" value="RAC2 GTPase cycle"/>
</dbReference>
<dbReference type="Reactome" id="R-GGA-9013405">
    <property type="pathway name" value="RHOD GTPase cycle"/>
</dbReference>
<dbReference type="Reactome" id="R-GGA-9013406">
    <property type="pathway name" value="RHOQ GTPase cycle"/>
</dbReference>
<dbReference type="Reactome" id="R-GGA-9013409">
    <property type="pathway name" value="RHOJ GTPase cycle"/>
</dbReference>
<dbReference type="Reactome" id="R-GGA-9013423">
    <property type="pathway name" value="RAC3 GTPase cycle"/>
</dbReference>
<dbReference type="EvolutionaryTrace" id="Q5ZMW5"/>
<dbReference type="PRO" id="PR:Q5ZMW5"/>
<dbReference type="Proteomes" id="UP000000539">
    <property type="component" value="Chromosome 13"/>
</dbReference>
<dbReference type="Bgee" id="ENSGALG00000033938">
    <property type="expression patterns" value="Expressed in granulocyte and 14 other cell types or tissues"/>
</dbReference>
<dbReference type="GO" id="GO:0005856">
    <property type="term" value="C:cytoskeleton"/>
    <property type="evidence" value="ECO:0007669"/>
    <property type="project" value="UniProtKB-SubCell"/>
</dbReference>
<dbReference type="GO" id="GO:0005829">
    <property type="term" value="C:cytosol"/>
    <property type="evidence" value="ECO:0000250"/>
    <property type="project" value="UniProtKB"/>
</dbReference>
<dbReference type="GO" id="GO:0010008">
    <property type="term" value="C:endosome membrane"/>
    <property type="evidence" value="ECO:0000250"/>
    <property type="project" value="UniProtKB"/>
</dbReference>
<dbReference type="GO" id="GO:0005925">
    <property type="term" value="C:focal adhesion"/>
    <property type="evidence" value="ECO:0007669"/>
    <property type="project" value="UniProtKB-SubCell"/>
</dbReference>
<dbReference type="GO" id="GO:0005739">
    <property type="term" value="C:mitochondrion"/>
    <property type="evidence" value="ECO:0007669"/>
    <property type="project" value="Ensembl"/>
</dbReference>
<dbReference type="GO" id="GO:0005096">
    <property type="term" value="F:GTPase activator activity"/>
    <property type="evidence" value="ECO:0000318"/>
    <property type="project" value="GO_Central"/>
</dbReference>
<dbReference type="GO" id="GO:0005543">
    <property type="term" value="F:phospholipid binding"/>
    <property type="evidence" value="ECO:0007669"/>
    <property type="project" value="Ensembl"/>
</dbReference>
<dbReference type="GO" id="GO:0030674">
    <property type="term" value="F:protein-macromolecule adaptor activity"/>
    <property type="evidence" value="ECO:0007669"/>
    <property type="project" value="Ensembl"/>
</dbReference>
<dbReference type="GO" id="GO:0000423">
    <property type="term" value="P:mitophagy"/>
    <property type="evidence" value="ECO:0007669"/>
    <property type="project" value="Ensembl"/>
</dbReference>
<dbReference type="GO" id="GO:0007165">
    <property type="term" value="P:signal transduction"/>
    <property type="evidence" value="ECO:0007669"/>
    <property type="project" value="InterPro"/>
</dbReference>
<dbReference type="CDD" id="cd01249">
    <property type="entry name" value="BAR-PH_GRAF_family"/>
    <property type="match status" value="1"/>
</dbReference>
<dbReference type="CDD" id="cd07636">
    <property type="entry name" value="BAR_GRAF"/>
    <property type="match status" value="1"/>
</dbReference>
<dbReference type="CDD" id="cd04374">
    <property type="entry name" value="RhoGAP_Graf"/>
    <property type="match status" value="1"/>
</dbReference>
<dbReference type="CDD" id="cd12064">
    <property type="entry name" value="SH3_GRAF"/>
    <property type="match status" value="1"/>
</dbReference>
<dbReference type="FunFam" id="1.10.555.10:FF:000006">
    <property type="entry name" value="Rho GTPase activating protein 26"/>
    <property type="match status" value="1"/>
</dbReference>
<dbReference type="FunFam" id="2.30.29.30:FF:000116">
    <property type="entry name" value="Rho GTPase activating protein 26"/>
    <property type="match status" value="1"/>
</dbReference>
<dbReference type="FunFam" id="1.20.1270.60:FF:000001">
    <property type="entry name" value="Rho GTPase-activating protein 26"/>
    <property type="match status" value="1"/>
</dbReference>
<dbReference type="FunFam" id="2.30.30.40:FF:000055">
    <property type="entry name" value="rho GTPase-activating protein 26 isoform X1"/>
    <property type="match status" value="1"/>
</dbReference>
<dbReference type="Gene3D" id="1.20.1270.60">
    <property type="entry name" value="Arfaptin homology (AH) domain/BAR domain"/>
    <property type="match status" value="1"/>
</dbReference>
<dbReference type="Gene3D" id="2.30.29.30">
    <property type="entry name" value="Pleckstrin-homology domain (PH domain)/Phosphotyrosine-binding domain (PTB)"/>
    <property type="match status" value="1"/>
</dbReference>
<dbReference type="Gene3D" id="1.10.555.10">
    <property type="entry name" value="Rho GTPase activation protein"/>
    <property type="match status" value="1"/>
</dbReference>
<dbReference type="Gene3D" id="2.30.30.40">
    <property type="entry name" value="SH3 Domains"/>
    <property type="match status" value="1"/>
</dbReference>
<dbReference type="InterPro" id="IPR027267">
    <property type="entry name" value="AH/BAR_dom_sf"/>
</dbReference>
<dbReference type="InterPro" id="IPR004148">
    <property type="entry name" value="BAR_dom"/>
</dbReference>
<dbReference type="InterPro" id="IPR035483">
    <property type="entry name" value="GRAF_BAR"/>
</dbReference>
<dbReference type="InterPro" id="IPR047234">
    <property type="entry name" value="GRAF_fam"/>
</dbReference>
<dbReference type="InterPro" id="IPR035481">
    <property type="entry name" value="GRAF_SH3"/>
</dbReference>
<dbReference type="InterPro" id="IPR011993">
    <property type="entry name" value="PH-like_dom_sf"/>
</dbReference>
<dbReference type="InterPro" id="IPR001849">
    <property type="entry name" value="PH_domain"/>
</dbReference>
<dbReference type="InterPro" id="IPR047225">
    <property type="entry name" value="PH_GRAF"/>
</dbReference>
<dbReference type="InterPro" id="IPR008936">
    <property type="entry name" value="Rho_GTPase_activation_prot"/>
</dbReference>
<dbReference type="InterPro" id="IPR000198">
    <property type="entry name" value="RhoGAP_dom"/>
</dbReference>
<dbReference type="InterPro" id="IPR036028">
    <property type="entry name" value="SH3-like_dom_sf"/>
</dbReference>
<dbReference type="InterPro" id="IPR001452">
    <property type="entry name" value="SH3_domain"/>
</dbReference>
<dbReference type="PANTHER" id="PTHR12552">
    <property type="entry name" value="OLIGOPHRENIN 1"/>
    <property type="match status" value="1"/>
</dbReference>
<dbReference type="PANTHER" id="PTHR12552:SF4">
    <property type="entry name" value="RHO GTPASE-ACTIVATING PROTEIN 26"/>
    <property type="match status" value="1"/>
</dbReference>
<dbReference type="Pfam" id="PF16746">
    <property type="entry name" value="BAR_3"/>
    <property type="match status" value="1"/>
</dbReference>
<dbReference type="Pfam" id="PF00169">
    <property type="entry name" value="PH"/>
    <property type="match status" value="1"/>
</dbReference>
<dbReference type="Pfam" id="PF00620">
    <property type="entry name" value="RhoGAP"/>
    <property type="match status" value="1"/>
</dbReference>
<dbReference type="Pfam" id="PF14604">
    <property type="entry name" value="SH3_9"/>
    <property type="match status" value="1"/>
</dbReference>
<dbReference type="SMART" id="SM00233">
    <property type="entry name" value="PH"/>
    <property type="match status" value="1"/>
</dbReference>
<dbReference type="SMART" id="SM00324">
    <property type="entry name" value="RhoGAP"/>
    <property type="match status" value="1"/>
</dbReference>
<dbReference type="SMART" id="SM00326">
    <property type="entry name" value="SH3"/>
    <property type="match status" value="1"/>
</dbReference>
<dbReference type="SUPFAM" id="SSF103657">
    <property type="entry name" value="BAR/IMD domain-like"/>
    <property type="match status" value="1"/>
</dbReference>
<dbReference type="SUPFAM" id="SSF48350">
    <property type="entry name" value="GTPase activation domain, GAP"/>
    <property type="match status" value="1"/>
</dbReference>
<dbReference type="SUPFAM" id="SSF50729">
    <property type="entry name" value="PH domain-like"/>
    <property type="match status" value="1"/>
</dbReference>
<dbReference type="SUPFAM" id="SSF50044">
    <property type="entry name" value="SH3-domain"/>
    <property type="match status" value="1"/>
</dbReference>
<dbReference type="PROSITE" id="PS50003">
    <property type="entry name" value="PH_DOMAIN"/>
    <property type="match status" value="1"/>
</dbReference>
<dbReference type="PROSITE" id="PS50238">
    <property type="entry name" value="RHOGAP"/>
    <property type="match status" value="1"/>
</dbReference>
<dbReference type="PROSITE" id="PS50002">
    <property type="entry name" value="SH3"/>
    <property type="match status" value="1"/>
</dbReference>
<name>RHG26_CHICK</name>
<accession>Q5ZMW5</accession>
<accession>Q98935</accession>
<evidence type="ECO:0000250" key="1">
    <source>
        <dbReference type="UniProtKB" id="A1A4S6"/>
    </source>
</evidence>
<evidence type="ECO:0000250" key="2">
    <source>
        <dbReference type="UniProtKB" id="Q9UNA1"/>
    </source>
</evidence>
<evidence type="ECO:0000255" key="3">
    <source>
        <dbReference type="PROSITE-ProRule" id="PRU00145"/>
    </source>
</evidence>
<evidence type="ECO:0000255" key="4">
    <source>
        <dbReference type="PROSITE-ProRule" id="PRU00172"/>
    </source>
</evidence>
<evidence type="ECO:0000255" key="5">
    <source>
        <dbReference type="PROSITE-ProRule" id="PRU00192"/>
    </source>
</evidence>
<evidence type="ECO:0000256" key="6">
    <source>
        <dbReference type="SAM" id="MobiDB-lite"/>
    </source>
</evidence>
<evidence type="ECO:0000269" key="7">
    <source>
    </source>
</evidence>
<evidence type="ECO:0000269" key="8">
    <source>
    </source>
</evidence>
<evidence type="ECO:0000305" key="9"/>
<evidence type="ECO:0007829" key="10">
    <source>
        <dbReference type="PDB" id="1F7C"/>
    </source>
</evidence>